<proteinExistence type="inferred from homology"/>
<accession>A4K2W8</accession>
<protein>
    <recommendedName>
        <fullName>WAP four-disulfide core domain protein 12</fullName>
    </recommendedName>
</protein>
<organism>
    <name type="scientific">Aotus nancymaae</name>
    <name type="common">Ma's night monkey</name>
    <dbReference type="NCBI Taxonomy" id="37293"/>
    <lineage>
        <taxon>Eukaryota</taxon>
        <taxon>Metazoa</taxon>
        <taxon>Chordata</taxon>
        <taxon>Craniata</taxon>
        <taxon>Vertebrata</taxon>
        <taxon>Euteleostomi</taxon>
        <taxon>Mammalia</taxon>
        <taxon>Eutheria</taxon>
        <taxon>Euarchontoglires</taxon>
        <taxon>Primates</taxon>
        <taxon>Haplorrhini</taxon>
        <taxon>Platyrrhini</taxon>
        <taxon>Aotidae</taxon>
        <taxon>Aotus</taxon>
    </lineage>
</organism>
<name>WFD12_AOTNA</name>
<feature type="signal peptide" evidence="2">
    <location>
        <begin position="1"/>
        <end position="23"/>
    </location>
</feature>
<feature type="chain" id="PRO_0000289645" description="WAP four-disulfide core domain protein 12">
    <location>
        <begin position="24"/>
        <end position="92"/>
    </location>
</feature>
<feature type="domain" description="WAP" evidence="3">
    <location>
        <begin position="27"/>
        <end position="74"/>
    </location>
</feature>
<feature type="disulfide bond" evidence="3">
    <location>
        <begin position="34"/>
        <end position="62"/>
    </location>
</feature>
<feature type="disulfide bond" evidence="3">
    <location>
        <begin position="41"/>
        <end position="66"/>
    </location>
</feature>
<feature type="disulfide bond" evidence="3">
    <location>
        <begin position="49"/>
        <end position="61"/>
    </location>
</feature>
<feature type="disulfide bond" evidence="3">
    <location>
        <begin position="55"/>
        <end position="70"/>
    </location>
</feature>
<evidence type="ECO:0000250" key="1"/>
<evidence type="ECO:0000255" key="2"/>
<evidence type="ECO:0000255" key="3">
    <source>
        <dbReference type="PROSITE-ProRule" id="PRU00722"/>
    </source>
</evidence>
<evidence type="ECO:0000305" key="4"/>
<comment type="function">
    <text evidence="1">Antibacterial protein. Putative acid-stable proteinase inhibitor (By similarity).</text>
</comment>
<comment type="subcellular location">
    <subcellularLocation>
        <location evidence="4">Secreted</location>
    </subcellularLocation>
</comment>
<reference key="1">
    <citation type="journal article" date="2007" name="Genome Res.">
        <title>Comparative sequence analyses reveal rapid and divergent evolutionary changes of the WFDC locus in the primate lineage.</title>
        <authorList>
            <consortium name="NISC comparative sequencing program"/>
            <person name="Hurle B."/>
            <person name="Swanson W."/>
            <person name="Green E.D."/>
        </authorList>
    </citation>
    <scope>NUCLEOTIDE SEQUENCE [GENOMIC DNA]</scope>
</reference>
<gene>
    <name type="primary">WFDC12</name>
</gene>
<keyword id="KW-0044">Antibiotic</keyword>
<keyword id="KW-0929">Antimicrobial</keyword>
<keyword id="KW-1015">Disulfide bond</keyword>
<keyword id="KW-0646">Protease inhibitor</keyword>
<keyword id="KW-1185">Reference proteome</keyword>
<keyword id="KW-0964">Secreted</keyword>
<keyword id="KW-0722">Serine protease inhibitor</keyword>
<keyword id="KW-0732">Signal</keyword>
<sequence length="92" mass="10021">MGSSRFLVLMVSLALVTLVAAEGVKGNIEKPEVCPADNVRCIKSDPPQCHTDQDCQGIRKCCYLHCGFKCVIPVKELEEGGNQDEDVSRPCP</sequence>
<dbReference type="EMBL" id="DP000046">
    <property type="protein sequence ID" value="ABO53003.1"/>
    <property type="molecule type" value="Genomic_DNA"/>
</dbReference>
<dbReference type="SMR" id="A4K2W8"/>
<dbReference type="STRING" id="37293.ENSANAP00000016550"/>
<dbReference type="Proteomes" id="UP000233020">
    <property type="component" value="Whole Genome Shotgun Assembly"/>
</dbReference>
<dbReference type="GO" id="GO:0005576">
    <property type="term" value="C:extracellular region"/>
    <property type="evidence" value="ECO:0007669"/>
    <property type="project" value="UniProtKB-SubCell"/>
</dbReference>
<dbReference type="GO" id="GO:0004867">
    <property type="term" value="F:serine-type endopeptidase inhibitor activity"/>
    <property type="evidence" value="ECO:0007669"/>
    <property type="project" value="UniProtKB-KW"/>
</dbReference>
<dbReference type="GO" id="GO:0042742">
    <property type="term" value="P:defense response to bacterium"/>
    <property type="evidence" value="ECO:0007669"/>
    <property type="project" value="UniProtKB-KW"/>
</dbReference>
<dbReference type="FunFam" id="4.10.75.10:FF:000005">
    <property type="entry name" value="WAP four-disulfide core domain protein 12"/>
    <property type="match status" value="1"/>
</dbReference>
<dbReference type="Gene3D" id="4.10.75.10">
    <property type="entry name" value="Elafin-like"/>
    <property type="match status" value="1"/>
</dbReference>
<dbReference type="InterPro" id="IPR036645">
    <property type="entry name" value="Elafin-like_sf"/>
</dbReference>
<dbReference type="InterPro" id="IPR008197">
    <property type="entry name" value="WAP_dom"/>
</dbReference>
<dbReference type="PANTHER" id="PTHR47769">
    <property type="entry name" value="WAP FOUR-DISULFIDE CORE DOMAIN PROTEIN 8"/>
    <property type="match status" value="1"/>
</dbReference>
<dbReference type="PANTHER" id="PTHR47769:SF1">
    <property type="entry name" value="WAP FOUR-DISULFIDE CORE DOMAIN PROTEIN 8"/>
    <property type="match status" value="1"/>
</dbReference>
<dbReference type="Pfam" id="PF00095">
    <property type="entry name" value="WAP"/>
    <property type="match status" value="1"/>
</dbReference>
<dbReference type="PRINTS" id="PR00003">
    <property type="entry name" value="4DISULPHCORE"/>
</dbReference>
<dbReference type="SMART" id="SM00217">
    <property type="entry name" value="WAP"/>
    <property type="match status" value="1"/>
</dbReference>
<dbReference type="SUPFAM" id="SSF57256">
    <property type="entry name" value="Elafin-like"/>
    <property type="match status" value="1"/>
</dbReference>
<dbReference type="PROSITE" id="PS51390">
    <property type="entry name" value="WAP"/>
    <property type="match status" value="1"/>
</dbReference>